<organism>
    <name type="scientific">Rhodopirellula baltica (strain DSM 10527 / NCIMB 13988 / SH1)</name>
    <dbReference type="NCBI Taxonomy" id="243090"/>
    <lineage>
        <taxon>Bacteria</taxon>
        <taxon>Pseudomonadati</taxon>
        <taxon>Planctomycetota</taxon>
        <taxon>Planctomycetia</taxon>
        <taxon>Pirellulales</taxon>
        <taxon>Pirellulaceae</taxon>
        <taxon>Rhodopirellula</taxon>
    </lineage>
</organism>
<evidence type="ECO:0000255" key="1">
    <source>
        <dbReference type="HAMAP-Rule" id="MF_00211"/>
    </source>
</evidence>
<feature type="chain" id="PRO_0000226039" description="Anthranilate phosphoribosyltransferase">
    <location>
        <begin position="1"/>
        <end position="342"/>
    </location>
</feature>
<feature type="binding site" evidence="1">
    <location>
        <position position="90"/>
    </location>
    <ligand>
        <name>5-phospho-alpha-D-ribose 1-diphosphate</name>
        <dbReference type="ChEBI" id="CHEBI:58017"/>
    </ligand>
</feature>
<feature type="binding site" evidence="1">
    <location>
        <position position="90"/>
    </location>
    <ligand>
        <name>anthranilate</name>
        <dbReference type="ChEBI" id="CHEBI:16567"/>
        <label>1</label>
    </ligand>
</feature>
<feature type="binding site" evidence="1">
    <location>
        <begin position="93"/>
        <end position="94"/>
    </location>
    <ligand>
        <name>5-phospho-alpha-D-ribose 1-diphosphate</name>
        <dbReference type="ChEBI" id="CHEBI:58017"/>
    </ligand>
</feature>
<feature type="binding site" evidence="1">
    <location>
        <position position="98"/>
    </location>
    <ligand>
        <name>5-phospho-alpha-D-ribose 1-diphosphate</name>
        <dbReference type="ChEBI" id="CHEBI:58017"/>
    </ligand>
</feature>
<feature type="binding site" evidence="1">
    <location>
        <begin position="100"/>
        <end position="103"/>
    </location>
    <ligand>
        <name>5-phospho-alpha-D-ribose 1-diphosphate</name>
        <dbReference type="ChEBI" id="CHEBI:58017"/>
    </ligand>
</feature>
<feature type="binding site" evidence="1">
    <location>
        <position position="102"/>
    </location>
    <ligand>
        <name>Mg(2+)</name>
        <dbReference type="ChEBI" id="CHEBI:18420"/>
        <label>1</label>
    </ligand>
</feature>
<feature type="binding site" evidence="1">
    <location>
        <begin position="118"/>
        <end position="126"/>
    </location>
    <ligand>
        <name>5-phospho-alpha-D-ribose 1-diphosphate</name>
        <dbReference type="ChEBI" id="CHEBI:58017"/>
    </ligand>
</feature>
<feature type="binding site" evidence="1">
    <location>
        <position position="121"/>
    </location>
    <ligand>
        <name>anthranilate</name>
        <dbReference type="ChEBI" id="CHEBI:16567"/>
        <label>1</label>
    </ligand>
</feature>
<feature type="binding site" evidence="1">
    <location>
        <position position="130"/>
    </location>
    <ligand>
        <name>5-phospho-alpha-D-ribose 1-diphosphate</name>
        <dbReference type="ChEBI" id="CHEBI:58017"/>
    </ligand>
</feature>
<feature type="binding site" evidence="1">
    <location>
        <position position="176"/>
    </location>
    <ligand>
        <name>anthranilate</name>
        <dbReference type="ChEBI" id="CHEBI:16567"/>
        <label>2</label>
    </ligand>
</feature>
<feature type="binding site" evidence="1">
    <location>
        <position position="235"/>
    </location>
    <ligand>
        <name>Mg(2+)</name>
        <dbReference type="ChEBI" id="CHEBI:18420"/>
        <label>2</label>
    </ligand>
</feature>
<feature type="binding site" evidence="1">
    <location>
        <position position="236"/>
    </location>
    <ligand>
        <name>Mg(2+)</name>
        <dbReference type="ChEBI" id="CHEBI:18420"/>
        <label>1</label>
    </ligand>
</feature>
<feature type="binding site" evidence="1">
    <location>
        <position position="236"/>
    </location>
    <ligand>
        <name>Mg(2+)</name>
        <dbReference type="ChEBI" id="CHEBI:18420"/>
        <label>2</label>
    </ligand>
</feature>
<comment type="function">
    <text evidence="1">Catalyzes the transfer of the phosphoribosyl group of 5-phosphorylribose-1-pyrophosphate (PRPP) to anthranilate to yield N-(5'-phosphoribosyl)-anthranilate (PRA).</text>
</comment>
<comment type="catalytic activity">
    <reaction evidence="1">
        <text>N-(5-phospho-beta-D-ribosyl)anthranilate + diphosphate = 5-phospho-alpha-D-ribose 1-diphosphate + anthranilate</text>
        <dbReference type="Rhea" id="RHEA:11768"/>
        <dbReference type="ChEBI" id="CHEBI:16567"/>
        <dbReference type="ChEBI" id="CHEBI:18277"/>
        <dbReference type="ChEBI" id="CHEBI:33019"/>
        <dbReference type="ChEBI" id="CHEBI:58017"/>
        <dbReference type="EC" id="2.4.2.18"/>
    </reaction>
</comment>
<comment type="cofactor">
    <cofactor evidence="1">
        <name>Mg(2+)</name>
        <dbReference type="ChEBI" id="CHEBI:18420"/>
    </cofactor>
    <text evidence="1">Binds 2 magnesium ions per monomer.</text>
</comment>
<comment type="pathway">
    <text evidence="1">Amino-acid biosynthesis; L-tryptophan biosynthesis; L-tryptophan from chorismate: step 2/5.</text>
</comment>
<comment type="subunit">
    <text evidence="1">Homodimer.</text>
</comment>
<comment type="similarity">
    <text evidence="1">Belongs to the anthranilate phosphoribosyltransferase family.</text>
</comment>
<protein>
    <recommendedName>
        <fullName evidence="1">Anthranilate phosphoribosyltransferase</fullName>
        <ecNumber evidence="1">2.4.2.18</ecNumber>
    </recommendedName>
</protein>
<accession>Q7UYS5</accession>
<name>TRPD_RHOBA</name>
<keyword id="KW-0028">Amino-acid biosynthesis</keyword>
<keyword id="KW-0057">Aromatic amino acid biosynthesis</keyword>
<keyword id="KW-0328">Glycosyltransferase</keyword>
<keyword id="KW-0460">Magnesium</keyword>
<keyword id="KW-0479">Metal-binding</keyword>
<keyword id="KW-1185">Reference proteome</keyword>
<keyword id="KW-0808">Transferase</keyword>
<keyword id="KW-0822">Tryptophan biosynthesis</keyword>
<gene>
    <name evidence="1" type="primary">trpD</name>
    <name type="ordered locus">RB410</name>
</gene>
<proteinExistence type="inferred from homology"/>
<sequence>MTDSSTDPSLSFSDAITHARGGNDLSAEQTGALIDAMLQGAANEEEVGQLLLALREKGEAVSELVGAARAMRKHMTRIDHEHDVLLDTCGTGGSGSGTFNISTAVAILASACGVAVAKHGNRRATSKTGSADVLECLGVKIESEPDQVSRRLNDIGICFCFAAKLHPAMRHVVSVRRKLAVPTLFNLLGPLCNPAGATHQLLGTAAPETQQKIAAALAELDTQRSYVLHAQDGQDEVSLDGETSCIEVASGTQQNHTWTPADFGLTPVHQNALAAADPPESAEIIRNLFGGSPGSHRDTVLAGCAAALRLVGRVSSLTEGVEIAAEAIDSKAAQDKLKQLAE</sequence>
<reference key="1">
    <citation type="journal article" date="2003" name="Proc. Natl. Acad. Sci. U.S.A.">
        <title>Complete genome sequence of the marine planctomycete Pirellula sp. strain 1.</title>
        <authorList>
            <person name="Gloeckner F.O."/>
            <person name="Kube M."/>
            <person name="Bauer M."/>
            <person name="Teeling H."/>
            <person name="Lombardot T."/>
            <person name="Ludwig W."/>
            <person name="Gade D."/>
            <person name="Beck A."/>
            <person name="Borzym K."/>
            <person name="Heitmann K."/>
            <person name="Rabus R."/>
            <person name="Schlesner H."/>
            <person name="Amann R."/>
            <person name="Reinhardt R."/>
        </authorList>
    </citation>
    <scope>NUCLEOTIDE SEQUENCE [LARGE SCALE GENOMIC DNA]</scope>
    <source>
        <strain>DSM 10527 / NCIMB 13988 / SH1</strain>
    </source>
</reference>
<dbReference type="EC" id="2.4.2.18" evidence="1"/>
<dbReference type="EMBL" id="BX294133">
    <property type="protein sequence ID" value="CAD71566.1"/>
    <property type="molecule type" value="Genomic_DNA"/>
</dbReference>
<dbReference type="RefSeq" id="NP_863893.1">
    <property type="nucleotide sequence ID" value="NC_005027.1"/>
</dbReference>
<dbReference type="RefSeq" id="WP_011117897.1">
    <property type="nucleotide sequence ID" value="NC_005027.1"/>
</dbReference>
<dbReference type="SMR" id="Q7UYS5"/>
<dbReference type="FunCoup" id="Q7UYS5">
    <property type="interactions" value="397"/>
</dbReference>
<dbReference type="STRING" id="243090.RB410"/>
<dbReference type="EnsemblBacteria" id="CAD71566">
    <property type="protein sequence ID" value="CAD71566"/>
    <property type="gene ID" value="RB410"/>
</dbReference>
<dbReference type="KEGG" id="rba:RB410"/>
<dbReference type="PATRIC" id="fig|243090.15.peg.208"/>
<dbReference type="eggNOG" id="COG0547">
    <property type="taxonomic scope" value="Bacteria"/>
</dbReference>
<dbReference type="HOGENOM" id="CLU_034315_2_1_0"/>
<dbReference type="InParanoid" id="Q7UYS5"/>
<dbReference type="OrthoDB" id="9806430at2"/>
<dbReference type="UniPathway" id="UPA00035">
    <property type="reaction ID" value="UER00041"/>
</dbReference>
<dbReference type="Proteomes" id="UP000001025">
    <property type="component" value="Chromosome"/>
</dbReference>
<dbReference type="GO" id="GO:0005829">
    <property type="term" value="C:cytosol"/>
    <property type="evidence" value="ECO:0000318"/>
    <property type="project" value="GO_Central"/>
</dbReference>
<dbReference type="GO" id="GO:0004048">
    <property type="term" value="F:anthranilate phosphoribosyltransferase activity"/>
    <property type="evidence" value="ECO:0007669"/>
    <property type="project" value="UniProtKB-UniRule"/>
</dbReference>
<dbReference type="GO" id="GO:0000287">
    <property type="term" value="F:magnesium ion binding"/>
    <property type="evidence" value="ECO:0007669"/>
    <property type="project" value="UniProtKB-UniRule"/>
</dbReference>
<dbReference type="GO" id="GO:0000162">
    <property type="term" value="P:L-tryptophan biosynthetic process"/>
    <property type="evidence" value="ECO:0000318"/>
    <property type="project" value="GO_Central"/>
</dbReference>
<dbReference type="FunFam" id="3.40.1030.10:FF:000002">
    <property type="entry name" value="Anthranilate phosphoribosyltransferase"/>
    <property type="match status" value="1"/>
</dbReference>
<dbReference type="Gene3D" id="3.40.1030.10">
    <property type="entry name" value="Nucleoside phosphorylase/phosphoribosyltransferase catalytic domain"/>
    <property type="match status" value="1"/>
</dbReference>
<dbReference type="Gene3D" id="1.20.970.10">
    <property type="entry name" value="Transferase, Pyrimidine Nucleoside Phosphorylase, Chain C"/>
    <property type="match status" value="1"/>
</dbReference>
<dbReference type="HAMAP" id="MF_00211">
    <property type="entry name" value="TrpD"/>
    <property type="match status" value="1"/>
</dbReference>
<dbReference type="InterPro" id="IPR005940">
    <property type="entry name" value="Anthranilate_Pribosyl_Tfrase"/>
</dbReference>
<dbReference type="InterPro" id="IPR000312">
    <property type="entry name" value="Glycosyl_Trfase_fam3"/>
</dbReference>
<dbReference type="InterPro" id="IPR017459">
    <property type="entry name" value="Glycosyl_Trfase_fam3_N_dom"/>
</dbReference>
<dbReference type="InterPro" id="IPR036320">
    <property type="entry name" value="Glycosyl_Trfase_fam3_N_dom_sf"/>
</dbReference>
<dbReference type="InterPro" id="IPR035902">
    <property type="entry name" value="Nuc_phospho_transferase"/>
</dbReference>
<dbReference type="NCBIfam" id="TIGR01245">
    <property type="entry name" value="trpD"/>
    <property type="match status" value="1"/>
</dbReference>
<dbReference type="PANTHER" id="PTHR43285">
    <property type="entry name" value="ANTHRANILATE PHOSPHORIBOSYLTRANSFERASE"/>
    <property type="match status" value="1"/>
</dbReference>
<dbReference type="PANTHER" id="PTHR43285:SF2">
    <property type="entry name" value="ANTHRANILATE PHOSPHORIBOSYLTRANSFERASE"/>
    <property type="match status" value="1"/>
</dbReference>
<dbReference type="Pfam" id="PF02885">
    <property type="entry name" value="Glycos_trans_3N"/>
    <property type="match status" value="1"/>
</dbReference>
<dbReference type="Pfam" id="PF00591">
    <property type="entry name" value="Glycos_transf_3"/>
    <property type="match status" value="1"/>
</dbReference>
<dbReference type="SUPFAM" id="SSF52418">
    <property type="entry name" value="Nucleoside phosphorylase/phosphoribosyltransferase catalytic domain"/>
    <property type="match status" value="1"/>
</dbReference>
<dbReference type="SUPFAM" id="SSF47648">
    <property type="entry name" value="Nucleoside phosphorylase/phosphoribosyltransferase N-terminal domain"/>
    <property type="match status" value="1"/>
</dbReference>